<proteinExistence type="inferred from homology"/>
<protein>
    <recommendedName>
        <fullName evidence="1">Dihydroorotase</fullName>
        <shortName evidence="1">DHOase</shortName>
        <ecNumber evidence="1">3.5.2.3</ecNumber>
    </recommendedName>
</protein>
<keyword id="KW-0378">Hydrolase</keyword>
<keyword id="KW-0479">Metal-binding</keyword>
<keyword id="KW-0665">Pyrimidine biosynthesis</keyword>
<keyword id="KW-1185">Reference proteome</keyword>
<keyword id="KW-0862">Zinc</keyword>
<sequence length="347" mass="37943">MTQSLTIRRPDDWHLHLRDGAMMRAVLPETARHFARAIIMPNLVPPVVTAQDALAYRDRIEAALPDGADFTPLMTLYLTEQTDPDDVEAAFADGLIHAVKLYPAGATTNSQSGVATLKNVYPVLERMAQIGLPLCIHGEVTDPQVDIFDREQAFIDTVLIPLRADLPDLKVTLEHITTSHGIDYVVGADGDIAGTITTHHLMINRNHMLVGGIRPHYYCLPIVKRASHQHALRRAATSGHPRFFLGTDSAPHLDGAKETACGCAGVFSATNTMSCLAHVFDEDGALVNLEAFTSLNGPARYGLAPNAATMTLEKRDHPTNYPAKFDTDDGPLTLFDPSTPLYWHVKD</sequence>
<reference key="1">
    <citation type="submission" date="2006-02" db="EMBL/GenBank/DDBJ databases">
        <title>Complete sequence of chromosome of Jannaschia sp. CCS1.</title>
        <authorList>
            <consortium name="US DOE Joint Genome Institute"/>
            <person name="Copeland A."/>
            <person name="Lucas S."/>
            <person name="Lapidus A."/>
            <person name="Barry K."/>
            <person name="Detter J.C."/>
            <person name="Glavina del Rio T."/>
            <person name="Hammon N."/>
            <person name="Israni S."/>
            <person name="Pitluck S."/>
            <person name="Brettin T."/>
            <person name="Bruce D."/>
            <person name="Han C."/>
            <person name="Tapia R."/>
            <person name="Gilna P."/>
            <person name="Chertkov O."/>
            <person name="Saunders E."/>
            <person name="Schmutz J."/>
            <person name="Larimer F."/>
            <person name="Land M."/>
            <person name="Kyrpides N."/>
            <person name="Lykidis A."/>
            <person name="Moran M.A."/>
            <person name="Belas R."/>
            <person name="Ye W."/>
            <person name="Buchan A."/>
            <person name="Gonzalez J.M."/>
            <person name="Schell M.A."/>
            <person name="Richardson P."/>
        </authorList>
    </citation>
    <scope>NUCLEOTIDE SEQUENCE [LARGE SCALE GENOMIC DNA]</scope>
    <source>
        <strain>CCS1</strain>
    </source>
</reference>
<feature type="chain" id="PRO_1000024019" description="Dihydroorotase">
    <location>
        <begin position="1"/>
        <end position="347"/>
    </location>
</feature>
<feature type="active site" evidence="1">
    <location>
        <position position="248"/>
    </location>
</feature>
<feature type="binding site" evidence="1">
    <location>
        <position position="14"/>
    </location>
    <ligand>
        <name>Zn(2+)</name>
        <dbReference type="ChEBI" id="CHEBI:29105"/>
        <label>1</label>
    </ligand>
</feature>
<feature type="binding site" evidence="1">
    <location>
        <begin position="16"/>
        <end position="18"/>
    </location>
    <ligand>
        <name>substrate</name>
    </ligand>
</feature>
<feature type="binding site" evidence="1">
    <location>
        <position position="16"/>
    </location>
    <ligand>
        <name>Zn(2+)</name>
        <dbReference type="ChEBI" id="CHEBI:29105"/>
        <label>1</label>
    </ligand>
</feature>
<feature type="binding site" evidence="1">
    <location>
        <position position="42"/>
    </location>
    <ligand>
        <name>substrate</name>
    </ligand>
</feature>
<feature type="binding site" description="via carbamate group" evidence="1">
    <location>
        <position position="100"/>
    </location>
    <ligand>
        <name>Zn(2+)</name>
        <dbReference type="ChEBI" id="CHEBI:29105"/>
        <label>1</label>
    </ligand>
</feature>
<feature type="binding site" description="via carbamate group" evidence="1">
    <location>
        <position position="100"/>
    </location>
    <ligand>
        <name>Zn(2+)</name>
        <dbReference type="ChEBI" id="CHEBI:29105"/>
        <label>2</label>
    </ligand>
</feature>
<feature type="binding site" evidence="1">
    <location>
        <position position="137"/>
    </location>
    <ligand>
        <name>substrate</name>
    </ligand>
</feature>
<feature type="binding site" evidence="1">
    <location>
        <position position="137"/>
    </location>
    <ligand>
        <name>Zn(2+)</name>
        <dbReference type="ChEBI" id="CHEBI:29105"/>
        <label>2</label>
    </ligand>
</feature>
<feature type="binding site" evidence="1">
    <location>
        <position position="175"/>
    </location>
    <ligand>
        <name>Zn(2+)</name>
        <dbReference type="ChEBI" id="CHEBI:29105"/>
        <label>2</label>
    </ligand>
</feature>
<feature type="binding site" evidence="1">
    <location>
        <position position="220"/>
    </location>
    <ligand>
        <name>substrate</name>
    </ligand>
</feature>
<feature type="binding site" evidence="1">
    <location>
        <position position="248"/>
    </location>
    <ligand>
        <name>Zn(2+)</name>
        <dbReference type="ChEBI" id="CHEBI:29105"/>
        <label>1</label>
    </ligand>
</feature>
<feature type="binding site" evidence="1">
    <location>
        <position position="252"/>
    </location>
    <ligand>
        <name>substrate</name>
    </ligand>
</feature>
<feature type="binding site" evidence="1">
    <location>
        <position position="264"/>
    </location>
    <ligand>
        <name>substrate</name>
    </ligand>
</feature>
<feature type="modified residue" description="N6-carboxylysine" evidence="1">
    <location>
        <position position="100"/>
    </location>
</feature>
<name>PYRC_JANSC</name>
<organism>
    <name type="scientific">Jannaschia sp. (strain CCS1)</name>
    <dbReference type="NCBI Taxonomy" id="290400"/>
    <lineage>
        <taxon>Bacteria</taxon>
        <taxon>Pseudomonadati</taxon>
        <taxon>Pseudomonadota</taxon>
        <taxon>Alphaproteobacteria</taxon>
        <taxon>Rhodobacterales</taxon>
        <taxon>Roseobacteraceae</taxon>
        <taxon>Jannaschia</taxon>
    </lineage>
</organism>
<dbReference type="EC" id="3.5.2.3" evidence="1"/>
<dbReference type="EMBL" id="CP000264">
    <property type="protein sequence ID" value="ABD54659.1"/>
    <property type="molecule type" value="Genomic_DNA"/>
</dbReference>
<dbReference type="RefSeq" id="WP_011454864.1">
    <property type="nucleotide sequence ID" value="NC_007802.1"/>
</dbReference>
<dbReference type="SMR" id="Q28RK3"/>
<dbReference type="STRING" id="290400.Jann_1742"/>
<dbReference type="KEGG" id="jan:Jann_1742"/>
<dbReference type="eggNOG" id="COG0418">
    <property type="taxonomic scope" value="Bacteria"/>
</dbReference>
<dbReference type="HOGENOM" id="CLU_041558_1_0_5"/>
<dbReference type="OrthoDB" id="9808095at2"/>
<dbReference type="UniPathway" id="UPA00070">
    <property type="reaction ID" value="UER00117"/>
</dbReference>
<dbReference type="Proteomes" id="UP000008326">
    <property type="component" value="Chromosome"/>
</dbReference>
<dbReference type="GO" id="GO:0005829">
    <property type="term" value="C:cytosol"/>
    <property type="evidence" value="ECO:0007669"/>
    <property type="project" value="TreeGrafter"/>
</dbReference>
<dbReference type="GO" id="GO:0004151">
    <property type="term" value="F:dihydroorotase activity"/>
    <property type="evidence" value="ECO:0007669"/>
    <property type="project" value="UniProtKB-UniRule"/>
</dbReference>
<dbReference type="GO" id="GO:0008270">
    <property type="term" value="F:zinc ion binding"/>
    <property type="evidence" value="ECO:0007669"/>
    <property type="project" value="UniProtKB-UniRule"/>
</dbReference>
<dbReference type="GO" id="GO:0006207">
    <property type="term" value="P:'de novo' pyrimidine nucleobase biosynthetic process"/>
    <property type="evidence" value="ECO:0007669"/>
    <property type="project" value="TreeGrafter"/>
</dbReference>
<dbReference type="GO" id="GO:0044205">
    <property type="term" value="P:'de novo' UMP biosynthetic process"/>
    <property type="evidence" value="ECO:0007669"/>
    <property type="project" value="UniProtKB-UniRule"/>
</dbReference>
<dbReference type="CDD" id="cd01294">
    <property type="entry name" value="DHOase"/>
    <property type="match status" value="1"/>
</dbReference>
<dbReference type="Gene3D" id="3.20.20.140">
    <property type="entry name" value="Metal-dependent hydrolases"/>
    <property type="match status" value="1"/>
</dbReference>
<dbReference type="HAMAP" id="MF_00219">
    <property type="entry name" value="PyrC_classII"/>
    <property type="match status" value="1"/>
</dbReference>
<dbReference type="InterPro" id="IPR006680">
    <property type="entry name" value="Amidohydro-rel"/>
</dbReference>
<dbReference type="InterPro" id="IPR004721">
    <property type="entry name" value="DHOdimr"/>
</dbReference>
<dbReference type="InterPro" id="IPR002195">
    <property type="entry name" value="Dihydroorotase_CS"/>
</dbReference>
<dbReference type="InterPro" id="IPR032466">
    <property type="entry name" value="Metal_Hydrolase"/>
</dbReference>
<dbReference type="NCBIfam" id="TIGR00856">
    <property type="entry name" value="pyrC_dimer"/>
    <property type="match status" value="1"/>
</dbReference>
<dbReference type="PANTHER" id="PTHR43137">
    <property type="entry name" value="DIHYDROOROTASE"/>
    <property type="match status" value="1"/>
</dbReference>
<dbReference type="PANTHER" id="PTHR43137:SF1">
    <property type="entry name" value="DIHYDROOROTASE"/>
    <property type="match status" value="1"/>
</dbReference>
<dbReference type="Pfam" id="PF01979">
    <property type="entry name" value="Amidohydro_1"/>
    <property type="match status" value="1"/>
</dbReference>
<dbReference type="PIRSF" id="PIRSF001237">
    <property type="entry name" value="DHOdimr"/>
    <property type="match status" value="1"/>
</dbReference>
<dbReference type="SUPFAM" id="SSF51556">
    <property type="entry name" value="Metallo-dependent hydrolases"/>
    <property type="match status" value="1"/>
</dbReference>
<dbReference type="PROSITE" id="PS00482">
    <property type="entry name" value="DIHYDROOROTASE_1"/>
    <property type="match status" value="1"/>
</dbReference>
<dbReference type="PROSITE" id="PS00483">
    <property type="entry name" value="DIHYDROOROTASE_2"/>
    <property type="match status" value="1"/>
</dbReference>
<accession>Q28RK3</accession>
<gene>
    <name evidence="1" type="primary">pyrC</name>
    <name type="ordered locus">Jann_1742</name>
</gene>
<evidence type="ECO:0000255" key="1">
    <source>
        <dbReference type="HAMAP-Rule" id="MF_00219"/>
    </source>
</evidence>
<comment type="function">
    <text evidence="1">Catalyzes the reversible cyclization of carbamoyl aspartate to dihydroorotate.</text>
</comment>
<comment type="catalytic activity">
    <reaction evidence="1">
        <text>(S)-dihydroorotate + H2O = N-carbamoyl-L-aspartate + H(+)</text>
        <dbReference type="Rhea" id="RHEA:24296"/>
        <dbReference type="ChEBI" id="CHEBI:15377"/>
        <dbReference type="ChEBI" id="CHEBI:15378"/>
        <dbReference type="ChEBI" id="CHEBI:30864"/>
        <dbReference type="ChEBI" id="CHEBI:32814"/>
        <dbReference type="EC" id="3.5.2.3"/>
    </reaction>
</comment>
<comment type="cofactor">
    <cofactor evidence="1">
        <name>Zn(2+)</name>
        <dbReference type="ChEBI" id="CHEBI:29105"/>
    </cofactor>
    <text evidence="1">Binds 2 Zn(2+) ions per subunit.</text>
</comment>
<comment type="pathway">
    <text evidence="1">Pyrimidine metabolism; UMP biosynthesis via de novo pathway; (S)-dihydroorotate from bicarbonate: step 3/3.</text>
</comment>
<comment type="subunit">
    <text evidence="1">Homodimer.</text>
</comment>
<comment type="similarity">
    <text evidence="1">Belongs to the metallo-dependent hydrolases superfamily. DHOase family. Class II DHOase subfamily.</text>
</comment>